<dbReference type="EC" id="3.1.6.-" evidence="3"/>
<dbReference type="EMBL" id="HG315671">
    <property type="protein sequence ID" value="CDF79933.1"/>
    <property type="molecule type" value="Genomic_DNA"/>
</dbReference>
<dbReference type="RefSeq" id="WP_051774719.1">
    <property type="nucleotide sequence ID" value="NZ_HG315671.1"/>
</dbReference>
<dbReference type="SMR" id="T2KN90"/>
<dbReference type="STRING" id="1347342.BN863_22210"/>
<dbReference type="PATRIC" id="fig|1347342.6.peg.2228"/>
<dbReference type="eggNOG" id="COG3119">
    <property type="taxonomic scope" value="Bacteria"/>
</dbReference>
<dbReference type="HOGENOM" id="CLU_006332_7_3_10"/>
<dbReference type="OrthoDB" id="9789742at2"/>
<dbReference type="Proteomes" id="UP000016160">
    <property type="component" value="Chromosome"/>
</dbReference>
<dbReference type="GO" id="GO:0042597">
    <property type="term" value="C:periplasmic space"/>
    <property type="evidence" value="ECO:0007669"/>
    <property type="project" value="UniProtKB-SubCell"/>
</dbReference>
<dbReference type="GO" id="GO:0004065">
    <property type="term" value="F:arylsulfatase activity"/>
    <property type="evidence" value="ECO:0007669"/>
    <property type="project" value="TreeGrafter"/>
</dbReference>
<dbReference type="GO" id="GO:0046872">
    <property type="term" value="F:metal ion binding"/>
    <property type="evidence" value="ECO:0007669"/>
    <property type="project" value="UniProtKB-KW"/>
</dbReference>
<dbReference type="CDD" id="cd16027">
    <property type="entry name" value="SGSH"/>
    <property type="match status" value="1"/>
</dbReference>
<dbReference type="Gene3D" id="3.40.720.10">
    <property type="entry name" value="Alkaline Phosphatase, subunit A"/>
    <property type="match status" value="1"/>
</dbReference>
<dbReference type="InterPro" id="IPR017850">
    <property type="entry name" value="Alkaline_phosphatase_core_sf"/>
</dbReference>
<dbReference type="InterPro" id="IPR050738">
    <property type="entry name" value="Sulfatase"/>
</dbReference>
<dbReference type="InterPro" id="IPR000917">
    <property type="entry name" value="Sulfatase_N"/>
</dbReference>
<dbReference type="PANTHER" id="PTHR42693">
    <property type="entry name" value="ARYLSULFATASE FAMILY MEMBER"/>
    <property type="match status" value="1"/>
</dbReference>
<dbReference type="PANTHER" id="PTHR42693:SF53">
    <property type="entry name" value="ENDO-4-O-SULFATASE"/>
    <property type="match status" value="1"/>
</dbReference>
<dbReference type="Pfam" id="PF00884">
    <property type="entry name" value="Sulfatase"/>
    <property type="match status" value="1"/>
</dbReference>
<dbReference type="SUPFAM" id="SSF53649">
    <property type="entry name" value="Alkaline phosphatase-like"/>
    <property type="match status" value="1"/>
</dbReference>
<accession>T2KN90</accession>
<comment type="function">
    <text evidence="3 6">Sulfatase involved in ulvan degradation (PubMed:31285597). Ulvan is the main polysaccharide component of the Ulvales (green seaweed) cell wall. It is composed of disaccharide building blocks comprising 3-sulfated rhamnose (Rha3S) linked to D-glucuronic acid (GlcA), L-iduronic acid (IduA), or D-xylose (Xyl) (Probable). The sulfatase desulfates Xyl2S-Rha3S, product of the degradation of ulvan by endo-acting alpha-1,4-L-rhamnosidase, to Xyl-Rha3S (PubMed:31285597).</text>
</comment>
<comment type="cofactor">
    <cofactor evidence="1">
        <name>Ca(2+)</name>
        <dbReference type="ChEBI" id="CHEBI:29108"/>
    </cofactor>
    <text evidence="1">Binds 1 Ca(2+) ion per subunit.</text>
</comment>
<comment type="subcellular location">
    <subcellularLocation>
        <location evidence="6">Periplasm</location>
    </subcellularLocation>
</comment>
<comment type="induction">
    <text evidence="3">By rhamnose.</text>
</comment>
<comment type="PTM">
    <text evidence="1">The conversion to 3-oxoalanine (also known as C-formylglycine, FGly), of a serine or cysteine residue in prokaryotes and of a cysteine residue in eukaryotes, is critical for catalytic activity.</text>
</comment>
<comment type="similarity">
    <text evidence="5">Belongs to the sulfatase family.</text>
</comment>
<name>PLH32_FORAG</name>
<organism>
    <name type="scientific">Formosa agariphila (strain DSM 15362 / KCTC 12365 / LMG 23005 / KMM 3901 / M-2Alg 35-1)</name>
    <dbReference type="NCBI Taxonomy" id="1347342"/>
    <lineage>
        <taxon>Bacteria</taxon>
        <taxon>Pseudomonadati</taxon>
        <taxon>Bacteroidota</taxon>
        <taxon>Flavobacteriia</taxon>
        <taxon>Flavobacteriales</taxon>
        <taxon>Flavobacteriaceae</taxon>
        <taxon>Formosa</taxon>
    </lineage>
</organism>
<reference key="1">
    <citation type="journal article" date="2013" name="Appl. Environ. Microbiol.">
        <title>The genome of the alga-associated marine flavobacterium Formosa agariphila KMM 3901T reveals a broad potential for degradation of algal polysaccharides.</title>
        <authorList>
            <person name="Mann A.J."/>
            <person name="Hahnke R.L."/>
            <person name="Huang S."/>
            <person name="Werner J."/>
            <person name="Xing P."/>
            <person name="Barbeyron T."/>
            <person name="Huettel B."/>
            <person name="Stueber K."/>
            <person name="Reinhardt R."/>
            <person name="Harder J."/>
            <person name="Gloeckner F.O."/>
            <person name="Amann R.I."/>
            <person name="Teeling H."/>
        </authorList>
    </citation>
    <scope>NUCLEOTIDE SEQUENCE [LARGE SCALE GENOMIC DNA]</scope>
    <source>
        <strain>DSM 15362 / KCTC 12365 / LMG 23005 / KMM 3901 / M-2Alg 35-1</strain>
    </source>
</reference>
<reference key="2">
    <citation type="journal article" date="2019" name="Nat. Chem. Biol.">
        <title>A marine bacterial enzymatic cascade degrades the algal polysaccharide ulvan.</title>
        <authorList>
            <person name="Reisky L."/>
            <person name="Prechoux A."/>
            <person name="Zuehlke M.K."/>
            <person name="Baeumgen M."/>
            <person name="Robb C.S."/>
            <person name="Gerlach N."/>
            <person name="Roret T."/>
            <person name="Stanetty C."/>
            <person name="Larocque R."/>
            <person name="Michel G."/>
            <person name="Song T."/>
            <person name="Markert S."/>
            <person name="Unfried F."/>
            <person name="Mihovilovic M.D."/>
            <person name="Trautwein-Schult A."/>
            <person name="Becher D."/>
            <person name="Schweder T."/>
            <person name="Bornscheuer U.T."/>
            <person name="Hehemann J.H."/>
        </authorList>
    </citation>
    <scope>FUNCTION</scope>
    <scope>CATALYTIC ACTIVITY</scope>
    <scope>SUBCELLULAR LOCATION</scope>
    <scope>INDUCTION</scope>
</reference>
<evidence type="ECO:0000250" key="1">
    <source>
        <dbReference type="UniProtKB" id="P51688"/>
    </source>
</evidence>
<evidence type="ECO:0000255" key="2"/>
<evidence type="ECO:0000269" key="3">
    <source>
    </source>
</evidence>
<evidence type="ECO:0000303" key="4">
    <source>
    </source>
</evidence>
<evidence type="ECO:0000305" key="5"/>
<evidence type="ECO:0000305" key="6">
    <source>
    </source>
</evidence>
<proteinExistence type="evidence at protein level"/>
<protein>
    <recommendedName>
        <fullName evidence="5">Ulvan-active sulfatase</fullName>
        <ecNumber evidence="3">3.1.6.-</ecNumber>
    </recommendedName>
    <alternativeName>
        <fullName evidence="4">Polysaccharide utilization locus H protein P32</fullName>
        <shortName>PUL H protein P32</shortName>
    </alternativeName>
    <alternativeName>
        <fullName evidence="5">Sulfatase family S1 subfamily 8 protein P32</fullName>
        <shortName evidence="4">P32_S1_8</shortName>
    </alternativeName>
</protein>
<gene>
    <name type="ORF">BN863_22210</name>
</gene>
<feature type="signal peptide" evidence="2">
    <location>
        <begin position="1"/>
        <end position="27"/>
    </location>
</feature>
<feature type="chain" id="PRO_0000448338" description="Ulvan-active sulfatase">
    <location>
        <begin position="28"/>
        <end position="596"/>
    </location>
</feature>
<feature type="active site" description="Nucleophile" evidence="1">
    <location>
        <position position="97"/>
    </location>
</feature>
<feature type="binding site" evidence="1">
    <location>
        <position position="58"/>
    </location>
    <ligand>
        <name>Ca(2+)</name>
        <dbReference type="ChEBI" id="CHEBI:29108"/>
    </ligand>
</feature>
<feature type="binding site" evidence="1">
    <location>
        <position position="59"/>
    </location>
    <ligand>
        <name>Ca(2+)</name>
        <dbReference type="ChEBI" id="CHEBI:29108"/>
    </ligand>
</feature>
<feature type="binding site" description="via 3-oxoalanine" evidence="1">
    <location>
        <position position="97"/>
    </location>
    <ligand>
        <name>Ca(2+)</name>
        <dbReference type="ChEBI" id="CHEBI:29108"/>
    </ligand>
</feature>
<feature type="binding site" evidence="1">
    <location>
        <position position="306"/>
    </location>
    <ligand>
        <name>Ca(2+)</name>
        <dbReference type="ChEBI" id="CHEBI:29108"/>
    </ligand>
</feature>
<feature type="binding site" evidence="1">
    <location>
        <position position="307"/>
    </location>
    <ligand>
        <name>Ca(2+)</name>
        <dbReference type="ChEBI" id="CHEBI:29108"/>
    </ligand>
</feature>
<feature type="modified residue" description="3-oxoalanine (Cys)" evidence="1">
    <location>
        <position position="97"/>
    </location>
</feature>
<sequence>MLFLRFKFFNNRLLFVSVLCFVICVSCKREHKEIKIKGEKATELKLPERPNILWLVTEDMGAYIPPFGDSTVVTPHLSKLAKEGVIYPNLYSTSGVCAPSRAAIATGMYPSSIGANHMRTNSFTKERGLPAYEAVPPSNVRMLSEWLRKAGYYCTNNYKTDYQFKAPVTAWDESSPYAHWRNRNDDQPFFAVFNFTDTHESGLFEPYGLREIETRLYRAGDTTYQWKNYGASHANNRMSEAETPQYLSKDTKFNIPPYLPETDLVKRDMWKLYNNIGEMDNQVGAVLQQLEDDGLLENTIIFFYGDHGGPLPREKRLIYDSGLNTPMIIRFPNKLEAETSDPQLISFVDFAPTLLSIIGEKPKEYMQGQAFLGQYKNKERSYIHAAADRFDAETDVIRAVRDKRFKYIRNYRPEQGYYLPIDYRERIPTMQELLRLKAEGKLNEEQMQWFRDVKPEEELFDCKSDPFELKNLANNPEYQNKLVELRKELDRWLTAIGDDANLPESELINKLWNGSNTQPVTSDPKVSINNGNITISCDTEGASVGYKIVTAGNKTSKTWHIYNGPFKMPLGSTLEIIAHRIGFKPSKAIQISTSDL</sequence>
<keyword id="KW-0106">Calcium</keyword>
<keyword id="KW-0378">Hydrolase</keyword>
<keyword id="KW-0479">Metal-binding</keyword>
<keyword id="KW-0574">Periplasm</keyword>
<keyword id="KW-1185">Reference proteome</keyword>
<keyword id="KW-0732">Signal</keyword>